<evidence type="ECO:0000255" key="1">
    <source>
        <dbReference type="PROSITE-ProRule" id="PRU00176"/>
    </source>
</evidence>
<evidence type="ECO:0000269" key="2">
    <source>
    </source>
</evidence>
<evidence type="ECO:0000269" key="3">
    <source>
    </source>
</evidence>
<organism>
    <name type="scientific">Schizosaccharomyces pombe (strain 972 / ATCC 24843)</name>
    <name type="common">Fission yeast</name>
    <dbReference type="NCBI Taxonomy" id="284812"/>
    <lineage>
        <taxon>Eukaryota</taxon>
        <taxon>Fungi</taxon>
        <taxon>Dikarya</taxon>
        <taxon>Ascomycota</taxon>
        <taxon>Taphrinomycotina</taxon>
        <taxon>Schizosaccharomycetes</taxon>
        <taxon>Schizosaccharomycetales</taxon>
        <taxon>Schizosaccharomycetaceae</taxon>
        <taxon>Schizosaccharomyces</taxon>
    </lineage>
</organism>
<protein>
    <recommendedName>
        <fullName>U1 snRNP-associated protein usp109</fullName>
    </recommendedName>
</protein>
<feature type="chain" id="PRO_0000082020" description="U1 snRNP-associated protein usp109">
    <location>
        <begin position="1"/>
        <end position="365"/>
    </location>
</feature>
<feature type="domain" description="RRM 1" evidence="1">
    <location>
        <begin position="3"/>
        <end position="79"/>
    </location>
</feature>
<feature type="domain" description="RRM 2" evidence="1">
    <location>
        <begin position="86"/>
        <end position="162"/>
    </location>
</feature>
<feature type="domain" description="RRM 3" evidence="1">
    <location>
        <begin position="189"/>
        <end position="259"/>
    </location>
</feature>
<proteinExistence type="evidence at protein level"/>
<keyword id="KW-0539">Nucleus</keyword>
<keyword id="KW-1185">Reference proteome</keyword>
<keyword id="KW-0677">Repeat</keyword>
<keyword id="KW-0694">RNA-binding</keyword>
<reference key="1">
    <citation type="journal article" date="2002" name="Nature">
        <title>The genome sequence of Schizosaccharomyces pombe.</title>
        <authorList>
            <person name="Wood V."/>
            <person name="Gwilliam R."/>
            <person name="Rajandream M.A."/>
            <person name="Lyne M.H."/>
            <person name="Lyne R."/>
            <person name="Stewart A."/>
            <person name="Sgouros J.G."/>
            <person name="Peat N."/>
            <person name="Hayles J."/>
            <person name="Baker S.G."/>
            <person name="Basham D."/>
            <person name="Bowman S."/>
            <person name="Brooks K."/>
            <person name="Brown D."/>
            <person name="Brown S."/>
            <person name="Chillingworth T."/>
            <person name="Churcher C.M."/>
            <person name="Collins M."/>
            <person name="Connor R."/>
            <person name="Cronin A."/>
            <person name="Davis P."/>
            <person name="Feltwell T."/>
            <person name="Fraser A."/>
            <person name="Gentles S."/>
            <person name="Goble A."/>
            <person name="Hamlin N."/>
            <person name="Harris D.E."/>
            <person name="Hidalgo J."/>
            <person name="Hodgson G."/>
            <person name="Holroyd S."/>
            <person name="Hornsby T."/>
            <person name="Howarth S."/>
            <person name="Huckle E.J."/>
            <person name="Hunt S."/>
            <person name="Jagels K."/>
            <person name="James K.D."/>
            <person name="Jones L."/>
            <person name="Jones M."/>
            <person name="Leather S."/>
            <person name="McDonald S."/>
            <person name="McLean J."/>
            <person name="Mooney P."/>
            <person name="Moule S."/>
            <person name="Mungall K.L."/>
            <person name="Murphy L.D."/>
            <person name="Niblett D."/>
            <person name="Odell C."/>
            <person name="Oliver K."/>
            <person name="O'Neil S."/>
            <person name="Pearson D."/>
            <person name="Quail M.A."/>
            <person name="Rabbinowitsch E."/>
            <person name="Rutherford K.M."/>
            <person name="Rutter S."/>
            <person name="Saunders D."/>
            <person name="Seeger K."/>
            <person name="Sharp S."/>
            <person name="Skelton J."/>
            <person name="Simmonds M.N."/>
            <person name="Squares R."/>
            <person name="Squares S."/>
            <person name="Stevens K."/>
            <person name="Taylor K."/>
            <person name="Taylor R.G."/>
            <person name="Tivey A."/>
            <person name="Walsh S.V."/>
            <person name="Warren T."/>
            <person name="Whitehead S."/>
            <person name="Woodward J.R."/>
            <person name="Volckaert G."/>
            <person name="Aert R."/>
            <person name="Robben J."/>
            <person name="Grymonprez B."/>
            <person name="Weltjens I."/>
            <person name="Vanstreels E."/>
            <person name="Rieger M."/>
            <person name="Schaefer M."/>
            <person name="Mueller-Auer S."/>
            <person name="Gabel C."/>
            <person name="Fuchs M."/>
            <person name="Duesterhoeft A."/>
            <person name="Fritzc C."/>
            <person name="Holzer E."/>
            <person name="Moestl D."/>
            <person name="Hilbert H."/>
            <person name="Borzym K."/>
            <person name="Langer I."/>
            <person name="Beck A."/>
            <person name="Lehrach H."/>
            <person name="Reinhardt R."/>
            <person name="Pohl T.M."/>
            <person name="Eger P."/>
            <person name="Zimmermann W."/>
            <person name="Wedler H."/>
            <person name="Wambutt R."/>
            <person name="Purnelle B."/>
            <person name="Goffeau A."/>
            <person name="Cadieu E."/>
            <person name="Dreano S."/>
            <person name="Gloux S."/>
            <person name="Lelaure V."/>
            <person name="Mottier S."/>
            <person name="Galibert F."/>
            <person name="Aves S.J."/>
            <person name="Xiang Z."/>
            <person name="Hunt C."/>
            <person name="Moore K."/>
            <person name="Hurst S.M."/>
            <person name="Lucas M."/>
            <person name="Rochet M."/>
            <person name="Gaillardin C."/>
            <person name="Tallada V.A."/>
            <person name="Garzon A."/>
            <person name="Thode G."/>
            <person name="Daga R.R."/>
            <person name="Cruzado L."/>
            <person name="Jimenez J."/>
            <person name="Sanchez M."/>
            <person name="del Rey F."/>
            <person name="Benito J."/>
            <person name="Dominguez A."/>
            <person name="Revuelta J.L."/>
            <person name="Moreno S."/>
            <person name="Armstrong J."/>
            <person name="Forsburg S.L."/>
            <person name="Cerutti L."/>
            <person name="Lowe T."/>
            <person name="McCombie W.R."/>
            <person name="Paulsen I."/>
            <person name="Potashkin J."/>
            <person name="Shpakovski G.V."/>
            <person name="Ussery D."/>
            <person name="Barrell B.G."/>
            <person name="Nurse P."/>
        </authorList>
    </citation>
    <scope>NUCLEOTIDE SEQUENCE [LARGE SCALE GENOMIC DNA]</scope>
    <source>
        <strain>972 / ATCC 24843</strain>
    </source>
</reference>
<reference key="2">
    <citation type="journal article" date="2011" name="Science">
        <title>Comparative functional genomics of the fission yeasts.</title>
        <authorList>
            <person name="Rhind N."/>
            <person name="Chen Z."/>
            <person name="Yassour M."/>
            <person name="Thompson D.A."/>
            <person name="Haas B.J."/>
            <person name="Habib N."/>
            <person name="Wapinski I."/>
            <person name="Roy S."/>
            <person name="Lin M.F."/>
            <person name="Heiman D.I."/>
            <person name="Young S.K."/>
            <person name="Furuya K."/>
            <person name="Guo Y."/>
            <person name="Pidoux A."/>
            <person name="Chen H.M."/>
            <person name="Robbertse B."/>
            <person name="Goldberg J.M."/>
            <person name="Aoki K."/>
            <person name="Bayne E.H."/>
            <person name="Berlin A.M."/>
            <person name="Desjardins C.A."/>
            <person name="Dobbs E."/>
            <person name="Dukaj L."/>
            <person name="Fan L."/>
            <person name="FitzGerald M.G."/>
            <person name="French C."/>
            <person name="Gujja S."/>
            <person name="Hansen K."/>
            <person name="Keifenheim D."/>
            <person name="Levin J.Z."/>
            <person name="Mosher R.A."/>
            <person name="Mueller C.A."/>
            <person name="Pfiffner J."/>
            <person name="Priest M."/>
            <person name="Russ C."/>
            <person name="Smialowska A."/>
            <person name="Swoboda P."/>
            <person name="Sykes S.M."/>
            <person name="Vaughn M."/>
            <person name="Vengrova S."/>
            <person name="Yoder R."/>
            <person name="Zeng Q."/>
            <person name="Allshire R."/>
            <person name="Baulcombe D."/>
            <person name="Birren B.W."/>
            <person name="Brown W."/>
            <person name="Ekwall K."/>
            <person name="Kellis M."/>
            <person name="Leatherwood J."/>
            <person name="Levin H."/>
            <person name="Margalit H."/>
            <person name="Martienssen R."/>
            <person name="Nieduszynski C.A."/>
            <person name="Spatafora J.W."/>
            <person name="Friedman N."/>
            <person name="Dalgaard J.Z."/>
            <person name="Baumann P."/>
            <person name="Niki H."/>
            <person name="Regev A."/>
            <person name="Nusbaum C."/>
        </authorList>
    </citation>
    <scope>REVISION OF GENE MODEL</scope>
</reference>
<reference key="3">
    <citation type="journal article" date="2006" name="Nat. Biotechnol.">
        <title>ORFeome cloning and global analysis of protein localization in the fission yeast Schizosaccharomyces pombe.</title>
        <authorList>
            <person name="Matsuyama A."/>
            <person name="Arai R."/>
            <person name="Yashiroda Y."/>
            <person name="Shirai A."/>
            <person name="Kamata A."/>
            <person name="Sekido S."/>
            <person name="Kobayashi Y."/>
            <person name="Hashimoto A."/>
            <person name="Hamamoto M."/>
            <person name="Hiraoka Y."/>
            <person name="Horinouchi S."/>
            <person name="Yoshida M."/>
        </authorList>
    </citation>
    <scope>SUBCELLULAR LOCATION [LARGE SCALE ANALYSIS]</scope>
</reference>
<reference key="4">
    <citation type="journal article" date="2007" name="Nucleic Acids Res.">
        <title>Proteomic analysis of the U1 snRNP of Schizosaccharomyces pombe reveals three essential organism-specific proteins.</title>
        <authorList>
            <person name="Newo A.N.S."/>
            <person name="Luetzelberger M."/>
            <person name="Bottner C.A."/>
            <person name="Wehland J."/>
            <person name="Wissing J."/>
            <person name="Jaensch L."/>
            <person name="Kaeufer N.F."/>
        </authorList>
    </citation>
    <scope>IDENTIFICATION IN THE U1 SNRNP COMPLEX</scope>
    <scope>IDENTIFICATION BY MASS SPECTROMETRY</scope>
    <scope>DISRUPTION PHENOTYPE</scope>
</reference>
<name>US109_SCHPO</name>
<dbReference type="EMBL" id="CU329671">
    <property type="protein sequence ID" value="CAB38692.2"/>
    <property type="molecule type" value="Genomic_DNA"/>
</dbReference>
<dbReference type="PIR" id="T39363">
    <property type="entry name" value="T39363"/>
</dbReference>
<dbReference type="RefSeq" id="NP_596836.2">
    <property type="nucleotide sequence ID" value="NM_001023857.2"/>
</dbReference>
<dbReference type="SMR" id="O94621"/>
<dbReference type="BioGRID" id="276654">
    <property type="interactions" value="14"/>
</dbReference>
<dbReference type="FunCoup" id="O94621">
    <property type="interactions" value="414"/>
</dbReference>
<dbReference type="STRING" id="284812.O94621"/>
<dbReference type="PaxDb" id="4896-SPBC1289.12.1"/>
<dbReference type="EnsemblFungi" id="SPBC1289.12.1">
    <property type="protein sequence ID" value="SPBC1289.12.1:pep"/>
    <property type="gene ID" value="SPBC1289.12"/>
</dbReference>
<dbReference type="GeneID" id="2540117"/>
<dbReference type="KEGG" id="spo:2540117"/>
<dbReference type="PomBase" id="SPBC1289.12">
    <property type="gene designation" value="usp109"/>
</dbReference>
<dbReference type="VEuPathDB" id="FungiDB:SPBC1289.12"/>
<dbReference type="eggNOG" id="KOG0118">
    <property type="taxonomic scope" value="Eukaryota"/>
</dbReference>
<dbReference type="HOGENOM" id="CLU_016304_6_2_1"/>
<dbReference type="InParanoid" id="O94621"/>
<dbReference type="OMA" id="NACEENK"/>
<dbReference type="PRO" id="PR:O94621"/>
<dbReference type="Proteomes" id="UP000002485">
    <property type="component" value="Chromosome II"/>
</dbReference>
<dbReference type="GO" id="GO:0005829">
    <property type="term" value="C:cytosol"/>
    <property type="evidence" value="ECO:0007005"/>
    <property type="project" value="PomBase"/>
</dbReference>
<dbReference type="GO" id="GO:0005634">
    <property type="term" value="C:nucleus"/>
    <property type="evidence" value="ECO:0007005"/>
    <property type="project" value="PomBase"/>
</dbReference>
<dbReference type="GO" id="GO:0005685">
    <property type="term" value="C:U1 snRNP"/>
    <property type="evidence" value="ECO:0000314"/>
    <property type="project" value="PomBase"/>
</dbReference>
<dbReference type="GO" id="GO:0003729">
    <property type="term" value="F:mRNA binding"/>
    <property type="evidence" value="ECO:0000318"/>
    <property type="project" value="GO_Central"/>
</dbReference>
<dbReference type="GO" id="GO:0000395">
    <property type="term" value="P:mRNA 5'-splice site recognition"/>
    <property type="evidence" value="ECO:0000305"/>
    <property type="project" value="PomBase"/>
</dbReference>
<dbReference type="GO" id="GO:0006376">
    <property type="term" value="P:mRNA splice site recognition"/>
    <property type="evidence" value="ECO:0000318"/>
    <property type="project" value="GO_Central"/>
</dbReference>
<dbReference type="Gene3D" id="3.30.70.330">
    <property type="match status" value="3"/>
</dbReference>
<dbReference type="InterPro" id="IPR012677">
    <property type="entry name" value="Nucleotide-bd_a/b_plait_sf"/>
</dbReference>
<dbReference type="InterPro" id="IPR035979">
    <property type="entry name" value="RBD_domain_sf"/>
</dbReference>
<dbReference type="InterPro" id="IPR050825">
    <property type="entry name" value="RBM42_RBP45_47-like"/>
</dbReference>
<dbReference type="InterPro" id="IPR000504">
    <property type="entry name" value="RRM_dom"/>
</dbReference>
<dbReference type="PANTHER" id="PTHR47640:SF10">
    <property type="entry name" value="TRNA SELENOCYSTEINE 1-ASSOCIATED PROTEIN 1-RELATED"/>
    <property type="match status" value="1"/>
</dbReference>
<dbReference type="PANTHER" id="PTHR47640">
    <property type="entry name" value="TRNA SELENOCYSTEINE 1-ASSOCIATED PROTEIN 1-RELATED-RELATED"/>
    <property type="match status" value="1"/>
</dbReference>
<dbReference type="Pfam" id="PF00076">
    <property type="entry name" value="RRM_1"/>
    <property type="match status" value="2"/>
</dbReference>
<dbReference type="SMART" id="SM00360">
    <property type="entry name" value="RRM"/>
    <property type="match status" value="3"/>
</dbReference>
<dbReference type="SUPFAM" id="SSF54928">
    <property type="entry name" value="RNA-binding domain, RBD"/>
    <property type="match status" value="2"/>
</dbReference>
<dbReference type="PROSITE" id="PS50102">
    <property type="entry name" value="RRM"/>
    <property type="match status" value="3"/>
</dbReference>
<accession>O94621</accession>
<sequence>MSTSLWLNNLEEWMNEDYIRAIFENVRKVNYYEDGESGAILKTCCIEFESQDAARNALERQSTQRLISGNPISLDVVPEWQKPSYYMLFISNIDPEVSENDIKYLFQRYNFISARVLRCVDGTSTSIAFIWLANESDIQNAQVEMQGAFCLKRSILVHSVKSDKNTYLSSPGFYGTPQPLNQFTDPNNTAVYVHQLPENITTQELRSYFLHFGEILYTQVNNNSGRIVFAQRYFAEQAINEMNNFPLHGVRIQLSWARPPSMALLPSKQSTYWPALAAPVYPSMKDVPNNPFTPFSPINPYYAKSWNHTASAPLLPPGLKNGSDYPYLSVPPDILNDSYLAMCEAVNSRLDAESTMLLPVHYSQA</sequence>
<gene>
    <name type="primary">usp109</name>
    <name type="ORF">SPBC1289.12</name>
</gene>
<comment type="subunit">
    <text evidence="3">Component of the U1 snRNP complex.</text>
</comment>
<comment type="subcellular location">
    <subcellularLocation>
        <location evidence="2">Nucleus</location>
    </subcellularLocation>
</comment>
<comment type="disruption phenotype">
    <text evidence="3">Leads to lethality.</text>
</comment>